<evidence type="ECO:0000255" key="1">
    <source>
        <dbReference type="HAMAP-Rule" id="MF_00121"/>
    </source>
</evidence>
<dbReference type="EC" id="6.3.5.-" evidence="1"/>
<dbReference type="EMBL" id="CP000116">
    <property type="protein sequence ID" value="AAZ96210.1"/>
    <property type="molecule type" value="Genomic_DNA"/>
</dbReference>
<dbReference type="RefSeq" id="WP_011310770.1">
    <property type="nucleotide sequence ID" value="NC_007404.1"/>
</dbReference>
<dbReference type="SMR" id="Q3SM40"/>
<dbReference type="STRING" id="292415.Tbd_0257"/>
<dbReference type="KEGG" id="tbd:Tbd_0257"/>
<dbReference type="eggNOG" id="COG0064">
    <property type="taxonomic scope" value="Bacteria"/>
</dbReference>
<dbReference type="HOGENOM" id="CLU_019240_0_0_4"/>
<dbReference type="OrthoDB" id="9804078at2"/>
<dbReference type="Proteomes" id="UP000008291">
    <property type="component" value="Chromosome"/>
</dbReference>
<dbReference type="GO" id="GO:0050566">
    <property type="term" value="F:asparaginyl-tRNA synthase (glutamine-hydrolyzing) activity"/>
    <property type="evidence" value="ECO:0007669"/>
    <property type="project" value="RHEA"/>
</dbReference>
<dbReference type="GO" id="GO:0005524">
    <property type="term" value="F:ATP binding"/>
    <property type="evidence" value="ECO:0007669"/>
    <property type="project" value="UniProtKB-KW"/>
</dbReference>
<dbReference type="GO" id="GO:0050567">
    <property type="term" value="F:glutaminyl-tRNA synthase (glutamine-hydrolyzing) activity"/>
    <property type="evidence" value="ECO:0007669"/>
    <property type="project" value="UniProtKB-UniRule"/>
</dbReference>
<dbReference type="GO" id="GO:0070681">
    <property type="term" value="P:glutaminyl-tRNAGln biosynthesis via transamidation"/>
    <property type="evidence" value="ECO:0007669"/>
    <property type="project" value="TreeGrafter"/>
</dbReference>
<dbReference type="GO" id="GO:0006412">
    <property type="term" value="P:translation"/>
    <property type="evidence" value="ECO:0007669"/>
    <property type="project" value="UniProtKB-UniRule"/>
</dbReference>
<dbReference type="FunFam" id="1.10.10.410:FF:000001">
    <property type="entry name" value="Aspartyl/glutamyl-tRNA(Asn/Gln) amidotransferase subunit B"/>
    <property type="match status" value="1"/>
</dbReference>
<dbReference type="FunFam" id="1.10.150.380:FF:000001">
    <property type="entry name" value="Aspartyl/glutamyl-tRNA(Asn/Gln) amidotransferase subunit B"/>
    <property type="match status" value="1"/>
</dbReference>
<dbReference type="Gene3D" id="1.10.10.410">
    <property type="match status" value="1"/>
</dbReference>
<dbReference type="Gene3D" id="1.10.150.380">
    <property type="entry name" value="GatB domain, N-terminal subdomain"/>
    <property type="match status" value="1"/>
</dbReference>
<dbReference type="HAMAP" id="MF_00121">
    <property type="entry name" value="GatB"/>
    <property type="match status" value="1"/>
</dbReference>
<dbReference type="InterPro" id="IPR017959">
    <property type="entry name" value="Asn/Gln-tRNA_amidoTrfase_suB/E"/>
</dbReference>
<dbReference type="InterPro" id="IPR006075">
    <property type="entry name" value="Asn/Gln-tRNA_Trfase_suB/E_cat"/>
</dbReference>
<dbReference type="InterPro" id="IPR018027">
    <property type="entry name" value="Asn/Gln_amidotransferase"/>
</dbReference>
<dbReference type="InterPro" id="IPR003789">
    <property type="entry name" value="Asn/Gln_tRNA_amidoTrase-B-like"/>
</dbReference>
<dbReference type="InterPro" id="IPR004413">
    <property type="entry name" value="GatB"/>
</dbReference>
<dbReference type="InterPro" id="IPR042114">
    <property type="entry name" value="GatB_C_1"/>
</dbReference>
<dbReference type="InterPro" id="IPR023168">
    <property type="entry name" value="GatB_Yqey_C_2"/>
</dbReference>
<dbReference type="InterPro" id="IPR017958">
    <property type="entry name" value="Gln-tRNA_amidoTrfase_suB_CS"/>
</dbReference>
<dbReference type="InterPro" id="IPR014746">
    <property type="entry name" value="Gln_synth/guanido_kin_cat_dom"/>
</dbReference>
<dbReference type="NCBIfam" id="TIGR00133">
    <property type="entry name" value="gatB"/>
    <property type="match status" value="1"/>
</dbReference>
<dbReference type="NCBIfam" id="NF004012">
    <property type="entry name" value="PRK05477.1-2"/>
    <property type="match status" value="1"/>
</dbReference>
<dbReference type="NCBIfam" id="NF004014">
    <property type="entry name" value="PRK05477.1-4"/>
    <property type="match status" value="1"/>
</dbReference>
<dbReference type="NCBIfam" id="NF004015">
    <property type="entry name" value="PRK05477.1-5"/>
    <property type="match status" value="1"/>
</dbReference>
<dbReference type="PANTHER" id="PTHR11659">
    <property type="entry name" value="GLUTAMYL-TRNA GLN AMIDOTRANSFERASE SUBUNIT B MITOCHONDRIAL AND PROKARYOTIC PET112-RELATED"/>
    <property type="match status" value="1"/>
</dbReference>
<dbReference type="PANTHER" id="PTHR11659:SF0">
    <property type="entry name" value="GLUTAMYL-TRNA(GLN) AMIDOTRANSFERASE SUBUNIT B, MITOCHONDRIAL"/>
    <property type="match status" value="1"/>
</dbReference>
<dbReference type="Pfam" id="PF02934">
    <property type="entry name" value="GatB_N"/>
    <property type="match status" value="1"/>
</dbReference>
<dbReference type="Pfam" id="PF02637">
    <property type="entry name" value="GatB_Yqey"/>
    <property type="match status" value="1"/>
</dbReference>
<dbReference type="SMART" id="SM00845">
    <property type="entry name" value="GatB_Yqey"/>
    <property type="match status" value="1"/>
</dbReference>
<dbReference type="SUPFAM" id="SSF89095">
    <property type="entry name" value="GatB/YqeY motif"/>
    <property type="match status" value="1"/>
</dbReference>
<dbReference type="SUPFAM" id="SSF55931">
    <property type="entry name" value="Glutamine synthetase/guanido kinase"/>
    <property type="match status" value="1"/>
</dbReference>
<dbReference type="PROSITE" id="PS01234">
    <property type="entry name" value="GATB"/>
    <property type="match status" value="1"/>
</dbReference>
<feature type="chain" id="PRO_0000241295" description="Aspartyl/glutamyl-tRNA(Asn/Gln) amidotransferase subunit B">
    <location>
        <begin position="1"/>
        <end position="475"/>
    </location>
</feature>
<sequence length="475" mass="51650">MKWETVIGLEVHTQLATQSKIFSASSTAFGAAPNTQASAVDIALPGVLPVLNKAAVECAIKFGLAIGATLNRVNVFDRKNYFYPDLPKGYQISQLAKPIVEGGALTIVVDGVEKTIHLTRAHMEEDAGKSLHEDFHGMTGIDLNRAGTPLLEIVSEPEMRSSAEAVAYARALHTLVTWIGICDGNMQEGSFRVDANVSVRPLGQAEFGTRREIKNLNSFRFLQQAIDYEVRWQIETLEDGGRIQQATVLFDPDTGETRMMRSKEEAHDYRYFPDPDLLPVKLDEAWIDAVRTTLPELPAAMRTRFQQDYGVSAYDASVLTGSRALAAYFEAAAQQSGQPKLAANWVMGELSAALNKAELDIGESPVSAVQLGTLITRIQDGTLSGKLAKQVFEGLWEGAGDVDGIIAARGLKQMSDAGELEKIVDEVLAANQKSVEEFRAGKDKAFNALVGQVMKASRGKANPAQVNELLKAKLQ</sequence>
<comment type="function">
    <text evidence="1">Allows the formation of correctly charged Asn-tRNA(Asn) or Gln-tRNA(Gln) through the transamidation of misacylated Asp-tRNA(Asn) or Glu-tRNA(Gln) in organisms which lack either or both of asparaginyl-tRNA or glutaminyl-tRNA synthetases. The reaction takes place in the presence of glutamine and ATP through an activated phospho-Asp-tRNA(Asn) or phospho-Glu-tRNA(Gln).</text>
</comment>
<comment type="catalytic activity">
    <reaction evidence="1">
        <text>L-glutamyl-tRNA(Gln) + L-glutamine + ATP + H2O = L-glutaminyl-tRNA(Gln) + L-glutamate + ADP + phosphate + H(+)</text>
        <dbReference type="Rhea" id="RHEA:17521"/>
        <dbReference type="Rhea" id="RHEA-COMP:9681"/>
        <dbReference type="Rhea" id="RHEA-COMP:9684"/>
        <dbReference type="ChEBI" id="CHEBI:15377"/>
        <dbReference type="ChEBI" id="CHEBI:15378"/>
        <dbReference type="ChEBI" id="CHEBI:29985"/>
        <dbReference type="ChEBI" id="CHEBI:30616"/>
        <dbReference type="ChEBI" id="CHEBI:43474"/>
        <dbReference type="ChEBI" id="CHEBI:58359"/>
        <dbReference type="ChEBI" id="CHEBI:78520"/>
        <dbReference type="ChEBI" id="CHEBI:78521"/>
        <dbReference type="ChEBI" id="CHEBI:456216"/>
    </reaction>
</comment>
<comment type="catalytic activity">
    <reaction evidence="1">
        <text>L-aspartyl-tRNA(Asn) + L-glutamine + ATP + H2O = L-asparaginyl-tRNA(Asn) + L-glutamate + ADP + phosphate + 2 H(+)</text>
        <dbReference type="Rhea" id="RHEA:14513"/>
        <dbReference type="Rhea" id="RHEA-COMP:9674"/>
        <dbReference type="Rhea" id="RHEA-COMP:9677"/>
        <dbReference type="ChEBI" id="CHEBI:15377"/>
        <dbReference type="ChEBI" id="CHEBI:15378"/>
        <dbReference type="ChEBI" id="CHEBI:29985"/>
        <dbReference type="ChEBI" id="CHEBI:30616"/>
        <dbReference type="ChEBI" id="CHEBI:43474"/>
        <dbReference type="ChEBI" id="CHEBI:58359"/>
        <dbReference type="ChEBI" id="CHEBI:78515"/>
        <dbReference type="ChEBI" id="CHEBI:78516"/>
        <dbReference type="ChEBI" id="CHEBI:456216"/>
    </reaction>
</comment>
<comment type="subunit">
    <text evidence="1">Heterotrimer of A, B and C subunits.</text>
</comment>
<comment type="similarity">
    <text evidence="1">Belongs to the GatB/GatE family. GatB subfamily.</text>
</comment>
<accession>Q3SM40</accession>
<keyword id="KW-0067">ATP-binding</keyword>
<keyword id="KW-0436">Ligase</keyword>
<keyword id="KW-0547">Nucleotide-binding</keyword>
<keyword id="KW-0648">Protein biosynthesis</keyword>
<keyword id="KW-1185">Reference proteome</keyword>
<protein>
    <recommendedName>
        <fullName evidence="1">Aspartyl/glutamyl-tRNA(Asn/Gln) amidotransferase subunit B</fullName>
        <shortName evidence="1">Asp/Glu-ADT subunit B</shortName>
        <ecNumber evidence="1">6.3.5.-</ecNumber>
    </recommendedName>
</protein>
<proteinExistence type="inferred from homology"/>
<organism>
    <name type="scientific">Thiobacillus denitrificans (strain ATCC 25259 / T1)</name>
    <dbReference type="NCBI Taxonomy" id="292415"/>
    <lineage>
        <taxon>Bacteria</taxon>
        <taxon>Pseudomonadati</taxon>
        <taxon>Pseudomonadota</taxon>
        <taxon>Betaproteobacteria</taxon>
        <taxon>Nitrosomonadales</taxon>
        <taxon>Thiobacillaceae</taxon>
        <taxon>Thiobacillus</taxon>
    </lineage>
</organism>
<name>GATB_THIDA</name>
<gene>
    <name evidence="1" type="primary">gatB</name>
    <name type="ordered locus">Tbd_0257</name>
</gene>
<reference key="1">
    <citation type="journal article" date="2006" name="J. Bacteriol.">
        <title>The genome sequence of the obligately chemolithoautotrophic, facultatively anaerobic bacterium Thiobacillus denitrificans.</title>
        <authorList>
            <person name="Beller H.R."/>
            <person name="Chain P.S."/>
            <person name="Letain T.E."/>
            <person name="Chakicherla A."/>
            <person name="Larimer F.W."/>
            <person name="Richardson P.M."/>
            <person name="Coleman M.A."/>
            <person name="Wood A.P."/>
            <person name="Kelly D.P."/>
        </authorList>
    </citation>
    <scope>NUCLEOTIDE SEQUENCE [LARGE SCALE GENOMIC DNA]</scope>
    <source>
        <strain>ATCC 25259 / T1</strain>
    </source>
</reference>